<keyword id="KW-0002">3D-structure</keyword>
<keyword id="KW-0094">Blood coagulation</keyword>
<keyword id="KW-0175">Coiled coil</keyword>
<keyword id="KW-0903">Direct protein sequencing</keyword>
<keyword id="KW-1015">Disulfide bond</keyword>
<keyword id="KW-0325">Glycoprotein</keyword>
<keyword id="KW-0356">Hemostasis</keyword>
<keyword id="KW-0964">Secreted</keyword>
<keyword id="KW-0765">Sulfation</keyword>
<organism>
    <name type="scientific">Petromyzon marinus</name>
    <name type="common">Sea lamprey</name>
    <dbReference type="NCBI Taxonomy" id="7757"/>
    <lineage>
        <taxon>Eukaryota</taxon>
        <taxon>Metazoa</taxon>
        <taxon>Chordata</taxon>
        <taxon>Craniata</taxon>
        <taxon>Vertebrata</taxon>
        <taxon>Cyclostomata</taxon>
        <taxon>Hyperoartia</taxon>
        <taxon>Petromyzontiformes</taxon>
        <taxon>Petromyzontidae</taxon>
        <taxon>Petromyzon</taxon>
    </lineage>
</organism>
<dbReference type="EMBL" id="M14773">
    <property type="protein sequence ID" value="AAA49261.1"/>
    <property type="molecule type" value="mRNA"/>
</dbReference>
<dbReference type="PIR" id="A25052">
    <property type="entry name" value="A25052"/>
</dbReference>
<dbReference type="PDB" id="1LWU">
    <property type="method" value="X-ray"/>
    <property type="resolution" value="2.80 A"/>
    <property type="chains" value="B/E/H/K=155-477"/>
</dbReference>
<dbReference type="PDB" id="1N73">
    <property type="method" value="X-ray"/>
    <property type="resolution" value="2.90 A"/>
    <property type="chains" value="B/E=155-477"/>
</dbReference>
<dbReference type="PDBsum" id="1LWU"/>
<dbReference type="PDBsum" id="1N73"/>
<dbReference type="SMR" id="P02678"/>
<dbReference type="STRING" id="7757.ENSPMAP00000007060"/>
<dbReference type="iPTMnet" id="P02678"/>
<dbReference type="EvolutionaryTrace" id="P02678"/>
<dbReference type="Proteomes" id="UP001318040">
    <property type="component" value="Unplaced"/>
</dbReference>
<dbReference type="GO" id="GO:0005577">
    <property type="term" value="C:fibrinogen complex"/>
    <property type="evidence" value="ECO:0007669"/>
    <property type="project" value="InterPro"/>
</dbReference>
<dbReference type="GO" id="GO:0005201">
    <property type="term" value="F:extracellular matrix structural constituent"/>
    <property type="evidence" value="ECO:0007669"/>
    <property type="project" value="TreeGrafter"/>
</dbReference>
<dbReference type="GO" id="GO:0030674">
    <property type="term" value="F:protein-macromolecule adaptor activity"/>
    <property type="evidence" value="ECO:0007669"/>
    <property type="project" value="TreeGrafter"/>
</dbReference>
<dbReference type="GO" id="GO:0005102">
    <property type="term" value="F:signaling receptor binding"/>
    <property type="evidence" value="ECO:0007669"/>
    <property type="project" value="InterPro"/>
</dbReference>
<dbReference type="GO" id="GO:0072377">
    <property type="term" value="P:blood coagulation, common pathway"/>
    <property type="evidence" value="ECO:0007669"/>
    <property type="project" value="TreeGrafter"/>
</dbReference>
<dbReference type="GO" id="GO:0042730">
    <property type="term" value="P:fibrinolysis"/>
    <property type="evidence" value="ECO:0007669"/>
    <property type="project" value="TreeGrafter"/>
</dbReference>
<dbReference type="GO" id="GO:0070527">
    <property type="term" value="P:platelet aggregation"/>
    <property type="evidence" value="ECO:0007669"/>
    <property type="project" value="TreeGrafter"/>
</dbReference>
<dbReference type="GO" id="GO:0034116">
    <property type="term" value="P:positive regulation of heterotypic cell-cell adhesion"/>
    <property type="evidence" value="ECO:0007669"/>
    <property type="project" value="TreeGrafter"/>
</dbReference>
<dbReference type="GO" id="GO:0051258">
    <property type="term" value="P:protein polymerization"/>
    <property type="evidence" value="ECO:0007669"/>
    <property type="project" value="InterPro"/>
</dbReference>
<dbReference type="CDD" id="cd00087">
    <property type="entry name" value="FReD"/>
    <property type="match status" value="1"/>
</dbReference>
<dbReference type="Gene3D" id="1.20.5.50">
    <property type="match status" value="2"/>
</dbReference>
<dbReference type="Gene3D" id="3.90.215.10">
    <property type="entry name" value="Gamma Fibrinogen, chain A, domain 1"/>
    <property type="match status" value="1"/>
</dbReference>
<dbReference type="InterPro" id="IPR037579">
    <property type="entry name" value="FIB_ANG-like"/>
</dbReference>
<dbReference type="InterPro" id="IPR036056">
    <property type="entry name" value="Fibrinogen-like_C"/>
</dbReference>
<dbReference type="InterPro" id="IPR014716">
    <property type="entry name" value="Fibrinogen_a/b/g_C_1"/>
</dbReference>
<dbReference type="InterPro" id="IPR002181">
    <property type="entry name" value="Fibrinogen_a/b/g_C_dom"/>
</dbReference>
<dbReference type="InterPro" id="IPR012290">
    <property type="entry name" value="Fibrinogen_a/b/g_coil_dom"/>
</dbReference>
<dbReference type="InterPro" id="IPR020837">
    <property type="entry name" value="Fibrinogen_CS"/>
</dbReference>
<dbReference type="NCBIfam" id="NF040941">
    <property type="entry name" value="GGGWT_bact"/>
    <property type="match status" value="1"/>
</dbReference>
<dbReference type="PANTHER" id="PTHR47221">
    <property type="entry name" value="FIBRINOGEN ALPHA CHAIN"/>
    <property type="match status" value="1"/>
</dbReference>
<dbReference type="PANTHER" id="PTHR47221:SF6">
    <property type="entry name" value="FIBRINOGEN ALPHA CHAIN"/>
    <property type="match status" value="1"/>
</dbReference>
<dbReference type="Pfam" id="PF08702">
    <property type="entry name" value="Fib_alpha"/>
    <property type="match status" value="1"/>
</dbReference>
<dbReference type="Pfam" id="PF00147">
    <property type="entry name" value="Fibrinogen_C"/>
    <property type="match status" value="1"/>
</dbReference>
<dbReference type="SMART" id="SM00186">
    <property type="entry name" value="FBG"/>
    <property type="match status" value="1"/>
</dbReference>
<dbReference type="SMART" id="SM01212">
    <property type="entry name" value="Fib_alpha"/>
    <property type="match status" value="1"/>
</dbReference>
<dbReference type="SUPFAM" id="SSF56496">
    <property type="entry name" value="Fibrinogen C-terminal domain-like"/>
    <property type="match status" value="1"/>
</dbReference>
<dbReference type="SUPFAM" id="SSF58010">
    <property type="entry name" value="Fibrinogen coiled-coil and central regions"/>
    <property type="match status" value="1"/>
</dbReference>
<dbReference type="PROSITE" id="PS00514">
    <property type="entry name" value="FIBRINOGEN_C_1"/>
    <property type="match status" value="1"/>
</dbReference>
<dbReference type="PROSITE" id="PS51406">
    <property type="entry name" value="FIBRINOGEN_C_2"/>
    <property type="match status" value="1"/>
</dbReference>
<proteinExistence type="evidence at protein level"/>
<evidence type="ECO:0000255" key="1">
    <source>
        <dbReference type="PROSITE-ProRule" id="PRU00739"/>
    </source>
</evidence>
<evidence type="ECO:0000256" key="2">
    <source>
        <dbReference type="SAM" id="MobiDB-lite"/>
    </source>
</evidence>
<evidence type="ECO:0000269" key="3">
    <source>
    </source>
</evidence>
<evidence type="ECO:0000269" key="4">
    <source>
    </source>
</evidence>
<evidence type="ECO:0000269" key="5">
    <source>
    </source>
</evidence>
<evidence type="ECO:0000305" key="6"/>
<evidence type="ECO:0007829" key="7">
    <source>
        <dbReference type="PDB" id="1LWU"/>
    </source>
</evidence>
<evidence type="ECO:0007829" key="8">
    <source>
        <dbReference type="PDB" id="1N73"/>
    </source>
</evidence>
<feature type="peptide" id="PRO_0000009096" description="Fibrinopeptide B" evidence="5">
    <location>
        <begin position="1"/>
        <end position="36"/>
    </location>
</feature>
<feature type="chain" id="PRO_0000009097" description="Fibrinogen beta chain">
    <location>
        <begin position="37" status="less than"/>
        <end position="477"/>
    </location>
</feature>
<feature type="domain" description="Fibrinogen C-terminal" evidence="1">
    <location>
        <begin position="221"/>
        <end position="476"/>
    </location>
</feature>
<feature type="region of interest" description="Disordered" evidence="2">
    <location>
        <begin position="1"/>
        <end position="76"/>
    </location>
</feature>
<feature type="compositionally biased region" description="Basic residues" evidence="2">
    <location>
        <begin position="44"/>
        <end position="55"/>
    </location>
</feature>
<feature type="modified residue" description="Sulfotyrosine" evidence="5">
    <location>
        <position position="13"/>
    </location>
</feature>
<feature type="glycosylation site" description="N-linked (GlcNAc...) asparagine" evidence="5">
    <location>
        <position position="27"/>
    </location>
</feature>
<feature type="disulfide bond" description="Interchain (with alpha chain)" evidence="1">
    <location>
        <position position="84"/>
    </location>
</feature>
<feature type="disulfide bond" description="Interchain (with alpha chain)" evidence="1">
    <location>
        <position position="95"/>
    </location>
</feature>
<feature type="disulfide bond" description="Interchain (with gamma chain)" evidence="1">
    <location>
        <position position="99"/>
    </location>
</feature>
<feature type="disulfide bond" description="Interchain (with alpha chain)" evidence="1">
    <location>
        <position position="212"/>
    </location>
</feature>
<feature type="disulfide bond" description="Interchain (with gamma chain)" evidence="1">
    <location>
        <position position="216"/>
    </location>
</feature>
<feature type="disulfide bond" evidence="1">
    <location>
        <begin position="220"/>
        <end position="304"/>
    </location>
</feature>
<feature type="disulfide bond" evidence="1">
    <location>
        <begin position="230"/>
        <end position="259"/>
    </location>
</feature>
<feature type="disulfide bond" evidence="1">
    <location>
        <begin position="412"/>
        <end position="425"/>
    </location>
</feature>
<feature type="non-consecutive residues" evidence="6">
    <location>
        <begin position="36"/>
        <end position="37"/>
    </location>
</feature>
<feature type="helix" evidence="7">
    <location>
        <begin position="162"/>
        <end position="168"/>
    </location>
</feature>
<feature type="helix" evidence="7">
    <location>
        <begin position="170"/>
        <end position="177"/>
    </location>
</feature>
<feature type="turn" evidence="7">
    <location>
        <begin position="178"/>
        <end position="180"/>
    </location>
</feature>
<feature type="helix" evidence="7">
    <location>
        <begin position="181"/>
        <end position="188"/>
    </location>
</feature>
<feature type="helix" evidence="7">
    <location>
        <begin position="190"/>
        <end position="210"/>
    </location>
</feature>
<feature type="strand" evidence="7">
    <location>
        <begin position="213"/>
        <end position="215"/>
    </location>
</feature>
<feature type="strand" evidence="7">
    <location>
        <begin position="222"/>
        <end position="224"/>
    </location>
</feature>
<feature type="strand" evidence="7">
    <location>
        <begin position="227"/>
        <end position="229"/>
    </location>
</feature>
<feature type="helix" evidence="7">
    <location>
        <begin position="230"/>
        <end position="235"/>
    </location>
</feature>
<feature type="strand" evidence="7">
    <location>
        <begin position="242"/>
        <end position="246"/>
    </location>
</feature>
<feature type="strand" evidence="7">
    <location>
        <begin position="255"/>
        <end position="260"/>
    </location>
</feature>
<feature type="helix" evidence="7">
    <location>
        <begin position="263"/>
        <end position="265"/>
    </location>
</feature>
<feature type="strand" evidence="7">
    <location>
        <begin position="268"/>
        <end position="277"/>
    </location>
</feature>
<feature type="helix" evidence="7">
    <location>
        <begin position="285"/>
        <end position="290"/>
    </location>
</feature>
<feature type="strand" evidence="7">
    <location>
        <begin position="291"/>
        <end position="293"/>
    </location>
</feature>
<feature type="strand" evidence="7">
    <location>
        <begin position="295"/>
        <end position="297"/>
    </location>
</feature>
<feature type="strand" evidence="7">
    <location>
        <begin position="300"/>
        <end position="302"/>
    </location>
</feature>
<feature type="strand" evidence="7">
    <location>
        <begin position="310"/>
        <end position="312"/>
    </location>
</feature>
<feature type="helix" evidence="7">
    <location>
        <begin position="314"/>
        <end position="323"/>
    </location>
</feature>
<feature type="strand" evidence="7">
    <location>
        <begin position="326"/>
        <end position="333"/>
    </location>
</feature>
<feature type="strand" evidence="8">
    <location>
        <begin position="335"/>
        <end position="337"/>
    </location>
</feature>
<feature type="strand" evidence="7">
    <location>
        <begin position="339"/>
        <end position="347"/>
    </location>
</feature>
<feature type="helix" evidence="7">
    <location>
        <begin position="352"/>
        <end position="354"/>
    </location>
</feature>
<feature type="strand" evidence="7">
    <location>
        <begin position="365"/>
        <end position="367"/>
    </location>
</feature>
<feature type="helix" evidence="7">
    <location>
        <begin position="370"/>
        <end position="373"/>
    </location>
</feature>
<feature type="helix" evidence="7">
    <location>
        <begin position="381"/>
        <end position="384"/>
    </location>
</feature>
<feature type="strand" evidence="7">
    <location>
        <begin position="401"/>
        <end position="403"/>
    </location>
</feature>
<feature type="turn" evidence="7">
    <location>
        <begin position="412"/>
        <end position="417"/>
    </location>
</feature>
<feature type="strand" evidence="7">
    <location>
        <begin position="423"/>
        <end position="425"/>
    </location>
</feature>
<feature type="strand" evidence="7">
    <location>
        <begin position="427"/>
        <end position="429"/>
    </location>
</feature>
<feature type="strand" evidence="8">
    <location>
        <begin position="436"/>
        <end position="439"/>
    </location>
</feature>
<feature type="turn" evidence="7">
    <location>
        <begin position="442"/>
        <end position="444"/>
    </location>
</feature>
<feature type="strand" evidence="7">
    <location>
        <begin position="452"/>
        <end position="455"/>
    </location>
</feature>
<feature type="helix" evidence="7">
    <location>
        <begin position="456"/>
        <end position="459"/>
    </location>
</feature>
<feature type="strand" evidence="7">
    <location>
        <begin position="466"/>
        <end position="473"/>
    </location>
</feature>
<name>FIBB_PETMA</name>
<protein>
    <recommendedName>
        <fullName>Fibrinogen beta chain</fullName>
    </recommendedName>
    <component>
        <recommendedName>
            <fullName>Fibrinopeptide B</fullName>
        </recommendedName>
    </component>
    <component>
        <recommendedName>
            <fullName>Fibrinogen beta chain</fullName>
        </recommendedName>
    </component>
</protein>
<comment type="function">
    <text>Fibrinogen has a double function: yielding monomers that polymerize into fibrin and acting as a cofactor in platelet aggregation.</text>
</comment>
<comment type="subunit">
    <text evidence="3 4">Heterohexamer; disulfide linked. Contains 2 sets of 3 non-identical chains (alpha, beta and gamma). The 2 heterotrimers are in head to head conformation with the N-termini in a small central domain.</text>
</comment>
<comment type="subcellular location">
    <subcellularLocation>
        <location evidence="4">Secreted</location>
    </subcellularLocation>
</comment>
<comment type="domain">
    <text evidence="3 4">A long coiled coil structure formed by 3 polypeptide chains connects the central nodule to the C-terminal domains (distal nodules). The long C-terminal ends of the alpha chains fold back, contributing a fourth strand to the coiled coil structure.</text>
</comment>
<comment type="PTM">
    <text>Conversion of fibrinogen to fibrin is triggered by thrombin, which cleaves fibrinopeptides A and B from alpha and beta chains, and thus exposes the N-terminal polymerization sites responsible for the formation of the soft clot. The soft clot is converted into the hard clot by factor XIIIA which catalyzes the epsilon-(gamma-glutamyl)lysine cross-linking between gamma chains (stronger) and between alpha chains (weaker) of different monomers.</text>
</comment>
<accession>P02678</accession>
<reference key="1">
    <citation type="journal article" date="1976" name="Biochim. Biophys. Acta">
        <title>Amino acid sequences of lamprey fibrinopeptides A and B and characterizations of the junctions split by lamprey and mammalian thrombins.</title>
        <authorList>
            <person name="Cottrell B.A."/>
            <person name="Doolittle R.F."/>
        </authorList>
    </citation>
    <scope>PROTEIN SEQUENCE OF 1-36</scope>
    <scope>SULFATION AT TYR-13</scope>
</reference>
<reference key="2">
    <citation type="journal article" date="1986" name="Biochemistry">
        <title>Complementary DNA sequence of lamprey fibrinogen beta chain.</title>
        <authorList>
            <person name="Bohonus V.L."/>
            <person name="Doolittle R.F."/>
            <person name="Pontes M."/>
            <person name="Strong D.D."/>
        </authorList>
    </citation>
    <scope>NUCLEOTIDE SEQUENCE [MRNA] OF 37-477</scope>
</reference>
<reference key="3">
    <citation type="journal article" date="2002" name="Biochemistry">
        <title>Crystal structure of fragment D from lamprey fibrinogen complexed with the peptide Gly-His-Arg-Pro-amide.</title>
        <authorList>
            <person name="Yang Z."/>
            <person name="Spraggon G."/>
            <person name="Pandi L."/>
            <person name="Everse S.J."/>
            <person name="Riley M."/>
            <person name="Doolittle R.F."/>
        </authorList>
    </citation>
    <scope>X-RAY CRYSTALLOGRAPHY (2.8 ANGSTROMS) OF 155-477</scope>
    <scope>SUBUNIT</scope>
    <scope>COILED COIL DOMAIN</scope>
</reference>
<reference key="4">
    <citation type="journal article" date="2002" name="Biochemistry">
        <title>The crystal structure of fragment double-D from cross-linked lamprey fibrin reveals isopeptide linkages across an unexpected D-D interface.</title>
        <authorList>
            <person name="Yang Z."/>
            <person name="Pandi L."/>
            <person name="Doolittle R.F."/>
        </authorList>
    </citation>
    <scope>X-RAY CRYSTALLOGRAPHY (2.9 ANGSTROMS) OF 155-477</scope>
    <scope>SUBCELLULAR LOCATION</scope>
    <scope>SUBUNIT</scope>
    <scope>COILED COIL DOMAIN</scope>
</reference>
<sequence length="477" mass="54270">EDLSLVGQPENDYDTGDDBTAADPDSNNTAAALDVRRPLPSGTRVRRPPLRHRRLAPGAVMSRDPPASPRPQEAQKAIRDEGGCMLPESDLGVLCPTGCELREELLKQRDPVRYKISMLKQNLTYFINSFDRMASDSNTLKQNVQTLRRRLNSRSSTHVNAQKEIENRYKEVKIRIESTVAGSLRSMKSVLEHLRAKMQRMEEAIKTQKELCSAPCTVNCRVPVVSGMHCEDIYRNGGRTSEAYYIQPDLFSEPYKVFCDMESHGGGWTVVQNRVDGSSNFARDWNTYKAEFGNIAFGNGKSICNIPGEYWLGTKTVHQLTKQHTQQVLFDMSDWEGSSVYAQYASFRPENEAQGYRLWVEDYSGNAGNALLEGATQLMGDNRTMTIHNGMQFSTFDRDNDNWNPGDPTKHCSREDAGGWWYNRCHAANPNGRYYWGGIYTKEQADYGTDDGVVWMNWKGSWYSMRQMAMKLRPKWP</sequence>